<gene>
    <name evidence="1" type="primary">psbL</name>
</gene>
<dbReference type="EMBL" id="AY704579">
    <property type="protein sequence ID" value="AAU81918.1"/>
    <property type="molecule type" value="Genomic_DNA"/>
</dbReference>
<dbReference type="EMBL" id="AY741371">
    <property type="protein sequence ID" value="AAX13884.1"/>
    <property type="molecule type" value="Genomic_DNA"/>
</dbReference>
<dbReference type="RefSeq" id="YP_277385.1">
    <property type="nucleotide sequence ID" value="NC_007288.1"/>
</dbReference>
<dbReference type="SMR" id="Q4G382"/>
<dbReference type="STRING" id="2903.Q4G382"/>
<dbReference type="GeneID" id="3562469"/>
<dbReference type="GO" id="GO:0009535">
    <property type="term" value="C:chloroplast thylakoid membrane"/>
    <property type="evidence" value="ECO:0007669"/>
    <property type="project" value="UniProtKB-SubCell"/>
</dbReference>
<dbReference type="GO" id="GO:0009539">
    <property type="term" value="C:photosystem II reaction center"/>
    <property type="evidence" value="ECO:0007669"/>
    <property type="project" value="InterPro"/>
</dbReference>
<dbReference type="GO" id="GO:0015979">
    <property type="term" value="P:photosynthesis"/>
    <property type="evidence" value="ECO:0007669"/>
    <property type="project" value="UniProtKB-UniRule"/>
</dbReference>
<dbReference type="HAMAP" id="MF_01317">
    <property type="entry name" value="PSII_PsbL"/>
    <property type="match status" value="1"/>
</dbReference>
<dbReference type="InterPro" id="IPR003372">
    <property type="entry name" value="PSII_PsbL"/>
</dbReference>
<dbReference type="InterPro" id="IPR037266">
    <property type="entry name" value="PSII_PsbL_sf"/>
</dbReference>
<dbReference type="NCBIfam" id="NF001972">
    <property type="entry name" value="PRK00753.1"/>
    <property type="match status" value="1"/>
</dbReference>
<dbReference type="Pfam" id="PF02419">
    <property type="entry name" value="PsbL"/>
    <property type="match status" value="1"/>
</dbReference>
<dbReference type="SUPFAM" id="SSF161017">
    <property type="entry name" value="Photosystem II reaction center protein L, PsbL"/>
    <property type="match status" value="1"/>
</dbReference>
<keyword id="KW-0150">Chloroplast</keyword>
<keyword id="KW-0472">Membrane</keyword>
<keyword id="KW-0602">Photosynthesis</keyword>
<keyword id="KW-0604">Photosystem II</keyword>
<keyword id="KW-0934">Plastid</keyword>
<keyword id="KW-0674">Reaction center</keyword>
<keyword id="KW-0793">Thylakoid</keyword>
<keyword id="KW-0812">Transmembrane</keyword>
<keyword id="KW-1133">Transmembrane helix</keyword>
<reference key="1">
    <citation type="journal article" date="2006" name="J. Mol. Evol.">
        <title>Rate variation as a function of gene origin in plastid-derived genes of peridinin-containing dinoflagellates.</title>
        <authorList>
            <person name="Bachvaroff T.R."/>
            <person name="Sanchez-Puerta M.V."/>
            <person name="Delwiche C.F."/>
        </authorList>
    </citation>
    <scope>NUCLEOTIDE SEQUENCE [GENOMIC DNA]</scope>
    <source>
        <strain>CCMP373 / CSIRO-CS-57 / BT6</strain>
    </source>
</reference>
<reference key="2">
    <citation type="journal article" date="2005" name="DNA Res.">
        <title>The complete plastid genome sequence of the haptophyte Emiliania huxleyi: a comparison to other plastid genomes.</title>
        <authorList>
            <person name="Sanchez-Puerta M.V."/>
            <person name="Bachvaroff T.R."/>
            <person name="Delwiche C.F."/>
        </authorList>
    </citation>
    <scope>NUCLEOTIDE SEQUENCE [LARGE SCALE GENOMIC DNA]</scope>
    <source>
        <strain>CCMP373 / CSIRO-CS-57 / BT6</strain>
    </source>
</reference>
<protein>
    <recommendedName>
        <fullName evidence="1">Photosystem II reaction center protein L</fullName>
        <shortName evidence="1">PSII-L</shortName>
    </recommendedName>
</protein>
<sequence>MSAPNPNKQPVELNRTSLYWGLLLMFVLAVLFSSYFFN</sequence>
<proteinExistence type="inferred from homology"/>
<feature type="chain" id="PRO_0000276227" description="Photosystem II reaction center protein L">
    <location>
        <begin position="1"/>
        <end position="38"/>
    </location>
</feature>
<feature type="transmembrane region" description="Helical" evidence="1">
    <location>
        <begin position="17"/>
        <end position="37"/>
    </location>
</feature>
<name>PSBL_EMIHU</name>
<geneLocation type="chloroplast"/>
<accession>Q4G382</accession>
<evidence type="ECO:0000255" key="1">
    <source>
        <dbReference type="HAMAP-Rule" id="MF_01317"/>
    </source>
</evidence>
<organism>
    <name type="scientific">Emiliania huxleyi</name>
    <name type="common">Coccolithophore</name>
    <name type="synonym">Pontosphaera huxleyi</name>
    <dbReference type="NCBI Taxonomy" id="2903"/>
    <lineage>
        <taxon>Eukaryota</taxon>
        <taxon>Haptista</taxon>
        <taxon>Haptophyta</taxon>
        <taxon>Prymnesiophyceae</taxon>
        <taxon>Isochrysidales</taxon>
        <taxon>Noelaerhabdaceae</taxon>
        <taxon>Emiliania</taxon>
    </lineage>
</organism>
<comment type="function">
    <text evidence="1">One of the components of the core complex of photosystem II (PSII). PSII is a light-driven water:plastoquinone oxidoreductase that uses light energy to abstract electrons from H(2)O, generating O(2) and a proton gradient subsequently used for ATP formation. It consists of a core antenna complex that captures photons, and an electron transfer chain that converts photonic excitation into a charge separation. This subunit is found at the monomer-monomer interface and is required for correct PSII assembly and/or dimerization.</text>
</comment>
<comment type="subunit">
    <text evidence="1">PSII is composed of 1 copy each of membrane proteins PsbA, PsbB, PsbC, PsbD, PsbE, PsbF, PsbH, PsbI, PsbJ, PsbK, PsbL, PsbM, PsbT, PsbX, PsbY, PsbZ, Psb30/Ycf12, at least 3 peripheral proteins of the oxygen-evolving complex and a large number of cofactors. It forms dimeric complexes.</text>
</comment>
<comment type="subcellular location">
    <subcellularLocation>
        <location evidence="1">Plastid</location>
        <location evidence="1">Chloroplast thylakoid membrane</location>
        <topology evidence="1">Single-pass membrane protein</topology>
    </subcellularLocation>
</comment>
<comment type="similarity">
    <text evidence="1">Belongs to the PsbL family.</text>
</comment>